<gene>
    <name evidence="1" type="primary">nuoK1</name>
    <name type="ordered locus">Acid345_1293</name>
</gene>
<accession>Q1IS55</accession>
<reference key="1">
    <citation type="journal article" date="2009" name="Appl. Environ. Microbiol.">
        <title>Three genomes from the phylum Acidobacteria provide insight into the lifestyles of these microorganisms in soils.</title>
        <authorList>
            <person name="Ward N.L."/>
            <person name="Challacombe J.F."/>
            <person name="Janssen P.H."/>
            <person name="Henrissat B."/>
            <person name="Coutinho P.M."/>
            <person name="Wu M."/>
            <person name="Xie G."/>
            <person name="Haft D.H."/>
            <person name="Sait M."/>
            <person name="Badger J."/>
            <person name="Barabote R.D."/>
            <person name="Bradley B."/>
            <person name="Brettin T.S."/>
            <person name="Brinkac L.M."/>
            <person name="Bruce D."/>
            <person name="Creasy T."/>
            <person name="Daugherty S.C."/>
            <person name="Davidsen T.M."/>
            <person name="DeBoy R.T."/>
            <person name="Detter J.C."/>
            <person name="Dodson R.J."/>
            <person name="Durkin A.S."/>
            <person name="Ganapathy A."/>
            <person name="Gwinn-Giglio M."/>
            <person name="Han C.S."/>
            <person name="Khouri H."/>
            <person name="Kiss H."/>
            <person name="Kothari S.P."/>
            <person name="Madupu R."/>
            <person name="Nelson K.E."/>
            <person name="Nelson W.C."/>
            <person name="Paulsen I."/>
            <person name="Penn K."/>
            <person name="Ren Q."/>
            <person name="Rosovitz M.J."/>
            <person name="Selengut J.D."/>
            <person name="Shrivastava S."/>
            <person name="Sullivan S.A."/>
            <person name="Tapia R."/>
            <person name="Thompson L.S."/>
            <person name="Watkins K.L."/>
            <person name="Yang Q."/>
            <person name="Yu C."/>
            <person name="Zafar N."/>
            <person name="Zhou L."/>
            <person name="Kuske C.R."/>
        </authorList>
    </citation>
    <scope>NUCLEOTIDE SEQUENCE [LARGE SCALE GENOMIC DNA]</scope>
    <source>
        <strain>Ellin345</strain>
    </source>
</reference>
<organism>
    <name type="scientific">Koribacter versatilis (strain Ellin345)</name>
    <dbReference type="NCBI Taxonomy" id="204669"/>
    <lineage>
        <taxon>Bacteria</taxon>
        <taxon>Pseudomonadati</taxon>
        <taxon>Acidobacteriota</taxon>
        <taxon>Terriglobia</taxon>
        <taxon>Terriglobales</taxon>
        <taxon>Candidatus Korobacteraceae</taxon>
        <taxon>Candidatus Korobacter</taxon>
    </lineage>
</organism>
<comment type="function">
    <text evidence="1">NDH-1 shuttles electrons from NADH, via FMN and iron-sulfur (Fe-S) centers, to quinones in the respiratory chain. The immediate electron acceptor for the enzyme in this species is believed to be ubiquinone. Couples the redox reaction to proton translocation (for every two electrons transferred, four hydrogen ions are translocated across the cytoplasmic membrane), and thus conserves the redox energy in a proton gradient.</text>
</comment>
<comment type="catalytic activity">
    <reaction evidence="1">
        <text>a quinone + NADH + 5 H(+)(in) = a quinol + NAD(+) + 4 H(+)(out)</text>
        <dbReference type="Rhea" id="RHEA:57888"/>
        <dbReference type="ChEBI" id="CHEBI:15378"/>
        <dbReference type="ChEBI" id="CHEBI:24646"/>
        <dbReference type="ChEBI" id="CHEBI:57540"/>
        <dbReference type="ChEBI" id="CHEBI:57945"/>
        <dbReference type="ChEBI" id="CHEBI:132124"/>
    </reaction>
</comment>
<comment type="subunit">
    <text evidence="1">NDH-1 is composed of 14 different subunits. Subunits NuoA, H, J, K, L, M, N constitute the membrane sector of the complex.</text>
</comment>
<comment type="subcellular location">
    <subcellularLocation>
        <location evidence="1">Cell inner membrane</location>
        <topology evidence="1">Multi-pass membrane protein</topology>
    </subcellularLocation>
</comment>
<comment type="similarity">
    <text evidence="1">Belongs to the complex I subunit 4L family.</text>
</comment>
<dbReference type="EC" id="7.1.1.-" evidence="1"/>
<dbReference type="EMBL" id="CP000360">
    <property type="protein sequence ID" value="ABF40295.1"/>
    <property type="molecule type" value="Genomic_DNA"/>
</dbReference>
<dbReference type="RefSeq" id="WP_011522097.1">
    <property type="nucleotide sequence ID" value="NC_008009.1"/>
</dbReference>
<dbReference type="SMR" id="Q1IS55"/>
<dbReference type="STRING" id="204669.Acid345_1293"/>
<dbReference type="EnsemblBacteria" id="ABF40295">
    <property type="protein sequence ID" value="ABF40295"/>
    <property type="gene ID" value="Acid345_1293"/>
</dbReference>
<dbReference type="KEGG" id="aba:Acid345_1293"/>
<dbReference type="eggNOG" id="COG0713">
    <property type="taxonomic scope" value="Bacteria"/>
</dbReference>
<dbReference type="HOGENOM" id="CLU_144724_0_0_0"/>
<dbReference type="OrthoDB" id="9810120at2"/>
<dbReference type="Proteomes" id="UP000002432">
    <property type="component" value="Chromosome"/>
</dbReference>
<dbReference type="GO" id="GO:0030964">
    <property type="term" value="C:NADH dehydrogenase complex"/>
    <property type="evidence" value="ECO:0007669"/>
    <property type="project" value="TreeGrafter"/>
</dbReference>
<dbReference type="GO" id="GO:0005886">
    <property type="term" value="C:plasma membrane"/>
    <property type="evidence" value="ECO:0007669"/>
    <property type="project" value="UniProtKB-SubCell"/>
</dbReference>
<dbReference type="GO" id="GO:0050136">
    <property type="term" value="F:NADH:ubiquinone reductase (non-electrogenic) activity"/>
    <property type="evidence" value="ECO:0007669"/>
    <property type="project" value="UniProtKB-UniRule"/>
</dbReference>
<dbReference type="GO" id="GO:0048038">
    <property type="term" value="F:quinone binding"/>
    <property type="evidence" value="ECO:0007669"/>
    <property type="project" value="UniProtKB-KW"/>
</dbReference>
<dbReference type="GO" id="GO:0042773">
    <property type="term" value="P:ATP synthesis coupled electron transport"/>
    <property type="evidence" value="ECO:0007669"/>
    <property type="project" value="InterPro"/>
</dbReference>
<dbReference type="FunFam" id="1.10.287.3510:FF:000001">
    <property type="entry name" value="NADH-quinone oxidoreductase subunit K"/>
    <property type="match status" value="1"/>
</dbReference>
<dbReference type="Gene3D" id="1.10.287.3510">
    <property type="match status" value="1"/>
</dbReference>
<dbReference type="HAMAP" id="MF_01456">
    <property type="entry name" value="NDH1_NuoK"/>
    <property type="match status" value="1"/>
</dbReference>
<dbReference type="InterPro" id="IPR001133">
    <property type="entry name" value="NADH_UbQ_OxRdtase_chain4L/K"/>
</dbReference>
<dbReference type="InterPro" id="IPR039428">
    <property type="entry name" value="NUOK/Mnh_C1-like"/>
</dbReference>
<dbReference type="NCBIfam" id="NF004320">
    <property type="entry name" value="PRK05715.1-2"/>
    <property type="match status" value="1"/>
</dbReference>
<dbReference type="NCBIfam" id="NF004321">
    <property type="entry name" value="PRK05715.1-3"/>
    <property type="match status" value="1"/>
</dbReference>
<dbReference type="NCBIfam" id="NF004323">
    <property type="entry name" value="PRK05715.1-5"/>
    <property type="match status" value="1"/>
</dbReference>
<dbReference type="PANTHER" id="PTHR11434:SF16">
    <property type="entry name" value="NADH-UBIQUINONE OXIDOREDUCTASE CHAIN 4L"/>
    <property type="match status" value="1"/>
</dbReference>
<dbReference type="PANTHER" id="PTHR11434">
    <property type="entry name" value="NADH-UBIQUINONE OXIDOREDUCTASE SUBUNIT ND4L"/>
    <property type="match status" value="1"/>
</dbReference>
<dbReference type="Pfam" id="PF00420">
    <property type="entry name" value="Oxidored_q2"/>
    <property type="match status" value="1"/>
</dbReference>
<proteinExistence type="inferred from homology"/>
<protein>
    <recommendedName>
        <fullName evidence="1">NADH-quinone oxidoreductase subunit K 1</fullName>
        <ecNumber evidence="1">7.1.1.-</ecNumber>
    </recommendedName>
    <alternativeName>
        <fullName evidence="1">NADH dehydrogenase I subunit K 1</fullName>
    </alternativeName>
    <alternativeName>
        <fullName evidence="1">NDH-1 subunit K 1</fullName>
    </alternativeName>
</protein>
<evidence type="ECO:0000255" key="1">
    <source>
        <dbReference type="HAMAP-Rule" id="MF_01456"/>
    </source>
</evidence>
<sequence length="101" mass="11036">MAEIGTMHYLVVAAMLFIIGTVGVVTRRNVVVILMSIELILNAVNLNLVAFSRLYGLHGQVFSIFVMVDAAAEAAVGLGIVIAFFRNKETVNVDEVDLLKW</sequence>
<name>NUOK1_KORVE</name>
<keyword id="KW-0997">Cell inner membrane</keyword>
<keyword id="KW-1003">Cell membrane</keyword>
<keyword id="KW-0472">Membrane</keyword>
<keyword id="KW-0520">NAD</keyword>
<keyword id="KW-0874">Quinone</keyword>
<keyword id="KW-1185">Reference proteome</keyword>
<keyword id="KW-1278">Translocase</keyword>
<keyword id="KW-0812">Transmembrane</keyword>
<keyword id="KW-1133">Transmembrane helix</keyword>
<keyword id="KW-0813">Transport</keyword>
<keyword id="KW-0830">Ubiquinone</keyword>
<feature type="chain" id="PRO_0000389909" description="NADH-quinone oxidoreductase subunit K 1">
    <location>
        <begin position="1"/>
        <end position="101"/>
    </location>
</feature>
<feature type="transmembrane region" description="Helical" evidence="1">
    <location>
        <begin position="4"/>
        <end position="24"/>
    </location>
</feature>
<feature type="transmembrane region" description="Helical" evidence="1">
    <location>
        <begin position="31"/>
        <end position="51"/>
    </location>
</feature>
<feature type="transmembrane region" description="Helical" evidence="1">
    <location>
        <begin position="64"/>
        <end position="84"/>
    </location>
</feature>